<reference key="1">
    <citation type="journal article" date="2009" name="Mol. Biol. Evol.">
        <title>Molecular evolution, functional variation, and proposed nomenclature of the gene family that includes sphingomyelinase D in sicariid spider venoms.</title>
        <authorList>
            <person name="Binford G.J."/>
            <person name="Bodner M.R."/>
            <person name="Cordes M.H."/>
            <person name="Baldwin K.L."/>
            <person name="Rynerson M.R."/>
            <person name="Burns S.N."/>
            <person name="Zobel-Thropp P.A."/>
        </authorList>
    </citation>
    <scope>NUCLEOTIDE SEQUENCE [MRNA]</scope>
    <scope>NOMENCLATURE</scope>
    <source>
        <tissue>Venom gland</tissue>
    </source>
</reference>
<comment type="function">
    <text evidence="1 3">Dermonecrotic toxins cleave the phosphodiester linkage between the phosphate and headgroup of certain phospholipids (sphingolipid and lysolipid substrates), forming an alcohol (often choline) and a cyclic phosphate (By similarity). This toxin acts on sphingomyelin (SM) (By similarity). It may also act on ceramide phosphoethanolamine (CPE), lysophosphatidylcholine (LPC) and lysophosphatidylethanolamine (LPE), but not on lysophosphatidylserine (LPS), and lysophosphatidylglycerol (LPG) (By similarity). It acts by transphosphatidylation, releasing exclusively cyclic phosphate products as second products (By similarity). Induces dermonecrosis, hemolysis, increased vascular permeability, edema, inflammatory response, and platelet aggregation (By similarity).</text>
</comment>
<comment type="catalytic activity">
    <reaction evidence="1">
        <text>an N-(acyl)-sphingosylphosphocholine = an N-(acyl)-sphingosyl-1,3-cyclic phosphate + choline</text>
        <dbReference type="Rhea" id="RHEA:60652"/>
        <dbReference type="ChEBI" id="CHEBI:15354"/>
        <dbReference type="ChEBI" id="CHEBI:64583"/>
        <dbReference type="ChEBI" id="CHEBI:143892"/>
    </reaction>
</comment>
<comment type="catalytic activity">
    <reaction evidence="1">
        <text>an N-(acyl)-sphingosylphosphoethanolamine = an N-(acyl)-sphingosyl-1,3-cyclic phosphate + ethanolamine</text>
        <dbReference type="Rhea" id="RHEA:60648"/>
        <dbReference type="ChEBI" id="CHEBI:57603"/>
        <dbReference type="ChEBI" id="CHEBI:143891"/>
        <dbReference type="ChEBI" id="CHEBI:143892"/>
    </reaction>
</comment>
<comment type="catalytic activity">
    <reaction evidence="1">
        <text>a 1-acyl-sn-glycero-3-phosphocholine = a 1-acyl-sn-glycero-2,3-cyclic phosphate + choline</text>
        <dbReference type="Rhea" id="RHEA:60700"/>
        <dbReference type="ChEBI" id="CHEBI:15354"/>
        <dbReference type="ChEBI" id="CHEBI:58168"/>
        <dbReference type="ChEBI" id="CHEBI:143947"/>
    </reaction>
</comment>
<comment type="catalytic activity">
    <reaction evidence="1">
        <text>a 1-acyl-sn-glycero-3-phosphoethanolamine = a 1-acyl-sn-glycero-2,3-cyclic phosphate + ethanolamine</text>
        <dbReference type="Rhea" id="RHEA:60704"/>
        <dbReference type="ChEBI" id="CHEBI:57603"/>
        <dbReference type="ChEBI" id="CHEBI:64381"/>
        <dbReference type="ChEBI" id="CHEBI:143947"/>
    </reaction>
</comment>
<comment type="cofactor">
    <cofactor evidence="5">
        <name>Mg(2+)</name>
        <dbReference type="ChEBI" id="CHEBI:18420"/>
    </cofactor>
    <text evidence="5">Binds 1 Mg(2+) ion per subunit.</text>
</comment>
<comment type="subcellular location">
    <subcellularLocation>
        <location evidence="8">Secreted</location>
    </subcellularLocation>
</comment>
<comment type="tissue specificity">
    <text evidence="8">Expressed by the venom gland.</text>
</comment>
<comment type="similarity">
    <text evidence="7">Belongs to the arthropod phospholipase D family. Class II subfamily.</text>
</comment>
<comment type="caution">
    <text evidence="1 2 4">The most common activity assay for dermonecrotic toxins detects enzymatic activity by monitoring choline release from substrate. Liberation of choline from sphingomyelin (SM) or lysophosphatidylcholine (LPC) is commonly assumed to result from substrate hydrolysis, giving either ceramide-1-phosphate (C1P) or lysophosphatidic acid (LPA), respectively, as a second product. However, two studies from Lajoie and colleagues (2013 and 2015) report the observation of exclusive formation of cyclic phosphate products as second products, resulting from intramolecular transphosphatidylation. Cyclic phosphates have vastly different biological properties from their monoester counterparts, and they may be relevant to the pathology of brown spider envenomation.</text>
</comment>
<proteinExistence type="evidence at transcript level"/>
<name>A1MA6_LOXDE</name>
<feature type="chain" id="PRO_0000392804" description="Dermonecrotic toxin LdSicTox-alphaIB3avi">
    <location>
        <begin position="1" status="less than"/>
        <end position="273"/>
    </location>
</feature>
<feature type="active site" evidence="5">
    <location>
        <position position="5"/>
    </location>
</feature>
<feature type="active site" description="Nucleophile" evidence="5">
    <location>
        <position position="41"/>
    </location>
</feature>
<feature type="binding site" evidence="5">
    <location>
        <position position="25"/>
    </location>
    <ligand>
        <name>Mg(2+)</name>
        <dbReference type="ChEBI" id="CHEBI:18420"/>
    </ligand>
</feature>
<feature type="binding site" evidence="5">
    <location>
        <position position="27"/>
    </location>
    <ligand>
        <name>Mg(2+)</name>
        <dbReference type="ChEBI" id="CHEBI:18420"/>
    </ligand>
</feature>
<feature type="binding site" evidence="5">
    <location>
        <position position="85"/>
    </location>
    <ligand>
        <name>Mg(2+)</name>
        <dbReference type="ChEBI" id="CHEBI:18420"/>
    </ligand>
</feature>
<feature type="disulfide bond" evidence="3">
    <location>
        <begin position="45"/>
        <end position="51"/>
    </location>
</feature>
<feature type="disulfide bond" evidence="3">
    <location>
        <begin position="47"/>
        <end position="190"/>
    </location>
</feature>
<feature type="non-terminal residue">
    <location>
        <position position="1"/>
    </location>
</feature>
<organism>
    <name type="scientific">Loxosceles deserta</name>
    <name type="common">Desert recluse spider</name>
    <dbReference type="NCBI Taxonomy" id="424440"/>
    <lineage>
        <taxon>Eukaryota</taxon>
        <taxon>Metazoa</taxon>
        <taxon>Ecdysozoa</taxon>
        <taxon>Arthropoda</taxon>
        <taxon>Chelicerata</taxon>
        <taxon>Arachnida</taxon>
        <taxon>Araneae</taxon>
        <taxon>Araneomorphae</taxon>
        <taxon>Haplogynae</taxon>
        <taxon>Scytodoidea</taxon>
        <taxon>Sicariidae</taxon>
        <taxon>Loxosceles</taxon>
    </lineage>
</organism>
<dbReference type="EC" id="4.6.1.-" evidence="4"/>
<dbReference type="EMBL" id="FJ171415">
    <property type="protein sequence ID" value="ACN48911.1"/>
    <property type="molecule type" value="mRNA"/>
</dbReference>
<dbReference type="SMR" id="C0JAY0"/>
<dbReference type="GO" id="GO:0005576">
    <property type="term" value="C:extracellular region"/>
    <property type="evidence" value="ECO:0007669"/>
    <property type="project" value="UniProtKB-SubCell"/>
</dbReference>
<dbReference type="GO" id="GO:0016829">
    <property type="term" value="F:lyase activity"/>
    <property type="evidence" value="ECO:0007669"/>
    <property type="project" value="UniProtKB-KW"/>
</dbReference>
<dbReference type="GO" id="GO:0046872">
    <property type="term" value="F:metal ion binding"/>
    <property type="evidence" value="ECO:0007669"/>
    <property type="project" value="UniProtKB-KW"/>
</dbReference>
<dbReference type="GO" id="GO:0008081">
    <property type="term" value="F:phosphoric diester hydrolase activity"/>
    <property type="evidence" value="ECO:0007669"/>
    <property type="project" value="InterPro"/>
</dbReference>
<dbReference type="GO" id="GO:0090729">
    <property type="term" value="F:toxin activity"/>
    <property type="evidence" value="ECO:0007669"/>
    <property type="project" value="UniProtKB-KW"/>
</dbReference>
<dbReference type="GO" id="GO:0031640">
    <property type="term" value="P:killing of cells of another organism"/>
    <property type="evidence" value="ECO:0007669"/>
    <property type="project" value="UniProtKB-KW"/>
</dbReference>
<dbReference type="GO" id="GO:0016042">
    <property type="term" value="P:lipid catabolic process"/>
    <property type="evidence" value="ECO:0007669"/>
    <property type="project" value="UniProtKB-KW"/>
</dbReference>
<dbReference type="CDD" id="cd08576">
    <property type="entry name" value="GDPD_like_SMaseD_PLD"/>
    <property type="match status" value="1"/>
</dbReference>
<dbReference type="Gene3D" id="3.20.20.190">
    <property type="entry name" value="Phosphatidylinositol (PI) phosphodiesterase"/>
    <property type="match status" value="1"/>
</dbReference>
<dbReference type="InterPro" id="IPR017946">
    <property type="entry name" value="PLC-like_Pdiesterase_TIM-brl"/>
</dbReference>
<dbReference type="SUPFAM" id="SSF51695">
    <property type="entry name" value="PLC-like phosphodiesterases"/>
    <property type="match status" value="1"/>
</dbReference>
<sequence length="273" mass="30339">WIMGHMVNAIAQIDEFVNLGANSIETDVSFDKNANPEYTYHGIPCDCGRTCTKSEKFNVFLQGLQKATTPGDSKYQVKLVLVVFDLKSSSLYDNQASDAGKKLAKSLLQNYWKNGNNGGRAYIVLSIPNLTHYKLITGFKETPKTEGHPELMEKVGYDFSGNDDIDQVAKAYKKAGVTGHVWQSDGITNCLPRGLDRVKQAVANRDSSNGFINKVYYWTVGKRSTTRGALDAGVDGIMTNYPDVIADVLSESAYKSKFRIATYEDNPWETFKN</sequence>
<accession>C0JAY0</accession>
<protein>
    <recommendedName>
        <fullName evidence="6">Dermonecrotic toxin LdSicTox-alphaIB3avi</fullName>
        <ecNumber evidence="4">4.6.1.-</ecNumber>
    </recommendedName>
    <alternativeName>
        <fullName>Phospholipase D</fullName>
        <shortName>PLD</shortName>
    </alternativeName>
    <alternativeName>
        <fullName>Sphingomyelin phosphodiesterase D</fullName>
        <shortName>SMD</shortName>
        <shortName>SMase D</shortName>
        <shortName>Sphingomyelinase D</shortName>
    </alternativeName>
</protein>
<evidence type="ECO:0000250" key="1">
    <source>
        <dbReference type="UniProtKB" id="A0A0D4WTV1"/>
    </source>
</evidence>
<evidence type="ECO:0000250" key="2">
    <source>
        <dbReference type="UniProtKB" id="A0A0D4WV12"/>
    </source>
</evidence>
<evidence type="ECO:0000250" key="3">
    <source>
        <dbReference type="UniProtKB" id="P0CE80"/>
    </source>
</evidence>
<evidence type="ECO:0000250" key="4">
    <source>
        <dbReference type="UniProtKB" id="Q4ZFU2"/>
    </source>
</evidence>
<evidence type="ECO:0000250" key="5">
    <source>
        <dbReference type="UniProtKB" id="Q8I914"/>
    </source>
</evidence>
<evidence type="ECO:0000303" key="6">
    <source>
    </source>
</evidence>
<evidence type="ECO:0000305" key="7"/>
<evidence type="ECO:0000305" key="8">
    <source>
    </source>
</evidence>
<keyword id="KW-0204">Cytolysis</keyword>
<keyword id="KW-1061">Dermonecrotic toxin</keyword>
<keyword id="KW-1015">Disulfide bond</keyword>
<keyword id="KW-0354">Hemolysis</keyword>
<keyword id="KW-0442">Lipid degradation</keyword>
<keyword id="KW-0443">Lipid metabolism</keyword>
<keyword id="KW-0456">Lyase</keyword>
<keyword id="KW-0460">Magnesium</keyword>
<keyword id="KW-0479">Metal-binding</keyword>
<keyword id="KW-0964">Secreted</keyword>
<keyword id="KW-0800">Toxin</keyword>